<accession>A4SYY9</accession>
<sequence length="621" mass="66798">MALLQISEPGKSLAPHQRRIAVGIDLGTTNSLVAIVQDALPKVLPDEQGRELLPSVVRYLPNGRTQAGFEALESVVIDPKNTILSVKRFMGRGISDVENIESAPYDFVDQPGMLKLRTVAGDKSPIEVSAEILARLRQLAEDSVNDDIVGAVITVPAYFDDAQRQATKDAAKLAGIEVLRLLNEPTAAAIAYGLDNATEGVYAVYDLGGGTFDISILRMSKGVFEVLSTGGDSALGGDDFDHRLYCWVIEQAKLPPLSIHDHRTLLQACKHAKELLSHNPLARVHETLADGTVVNVGISQAQLFEITQNLVSKTLVACKKALRDAGLKAEDIKGVVMVGGSTRMPNVQRAVGELFGTKPLNNLNPDQVVALGAAMQADLLAGNQSKDDEWLLLDVIPLSLGIETMGGLVEKIIPRNTPIPVARAQDFTTFKDGQTALAIQVVQGERELAQDCRSLGRFELRGIPPMAAGAARIRVTFQVDADGLLSVSATEIGSGVKASIDIKPSYGLTDGEITRMLQEGFSSAKEDLLARSLREEQVSAQRLLDAVQTALSTDRALLNEQEQAAIDQEMAQLQKILNEETDSSVVRKAVDHAAKATDEFAQKRMNASIQKALSGKNVAEI</sequence>
<gene>
    <name evidence="1" type="primary">hscA</name>
    <name type="ordered locus">Pnuc_1489</name>
</gene>
<feature type="chain" id="PRO_1000082983" description="Chaperone protein HscA homolog">
    <location>
        <begin position="1"/>
        <end position="621"/>
    </location>
</feature>
<comment type="function">
    <text evidence="1">Chaperone involved in the maturation of iron-sulfur cluster-containing proteins. Has a low intrinsic ATPase activity which is markedly stimulated by HscB.</text>
</comment>
<comment type="similarity">
    <text evidence="1">Belongs to the heat shock protein 70 family.</text>
</comment>
<evidence type="ECO:0000255" key="1">
    <source>
        <dbReference type="HAMAP-Rule" id="MF_00679"/>
    </source>
</evidence>
<proteinExistence type="inferred from homology"/>
<dbReference type="EMBL" id="CP000655">
    <property type="protein sequence ID" value="ABP34703.1"/>
    <property type="molecule type" value="Genomic_DNA"/>
</dbReference>
<dbReference type="RefSeq" id="WP_011903326.1">
    <property type="nucleotide sequence ID" value="NC_009379.1"/>
</dbReference>
<dbReference type="SMR" id="A4SYY9"/>
<dbReference type="GeneID" id="31481880"/>
<dbReference type="KEGG" id="pnu:Pnuc_1489"/>
<dbReference type="eggNOG" id="COG0443">
    <property type="taxonomic scope" value="Bacteria"/>
</dbReference>
<dbReference type="HOGENOM" id="CLU_005965_2_3_4"/>
<dbReference type="Proteomes" id="UP000000231">
    <property type="component" value="Chromosome"/>
</dbReference>
<dbReference type="GO" id="GO:0005524">
    <property type="term" value="F:ATP binding"/>
    <property type="evidence" value="ECO:0007669"/>
    <property type="project" value="UniProtKB-KW"/>
</dbReference>
<dbReference type="GO" id="GO:0016887">
    <property type="term" value="F:ATP hydrolysis activity"/>
    <property type="evidence" value="ECO:0007669"/>
    <property type="project" value="UniProtKB-UniRule"/>
</dbReference>
<dbReference type="GO" id="GO:0140662">
    <property type="term" value="F:ATP-dependent protein folding chaperone"/>
    <property type="evidence" value="ECO:0007669"/>
    <property type="project" value="InterPro"/>
</dbReference>
<dbReference type="GO" id="GO:0051082">
    <property type="term" value="F:unfolded protein binding"/>
    <property type="evidence" value="ECO:0007669"/>
    <property type="project" value="InterPro"/>
</dbReference>
<dbReference type="GO" id="GO:0016226">
    <property type="term" value="P:iron-sulfur cluster assembly"/>
    <property type="evidence" value="ECO:0007669"/>
    <property type="project" value="InterPro"/>
</dbReference>
<dbReference type="FunFam" id="3.30.420.40:FF:000046">
    <property type="entry name" value="Chaperone protein HscA"/>
    <property type="match status" value="1"/>
</dbReference>
<dbReference type="FunFam" id="2.60.34.10:FF:000005">
    <property type="entry name" value="Chaperone protein HscA homolog"/>
    <property type="match status" value="1"/>
</dbReference>
<dbReference type="Gene3D" id="1.20.1270.10">
    <property type="match status" value="1"/>
</dbReference>
<dbReference type="Gene3D" id="3.30.420.40">
    <property type="match status" value="2"/>
</dbReference>
<dbReference type="Gene3D" id="3.90.640.10">
    <property type="entry name" value="Actin, Chain A, domain 4"/>
    <property type="match status" value="1"/>
</dbReference>
<dbReference type="Gene3D" id="2.60.34.10">
    <property type="entry name" value="Substrate Binding Domain Of DNAk, Chain A, domain 1"/>
    <property type="match status" value="1"/>
</dbReference>
<dbReference type="HAMAP" id="MF_00679">
    <property type="entry name" value="HscA"/>
    <property type="match status" value="1"/>
</dbReference>
<dbReference type="InterPro" id="IPR043129">
    <property type="entry name" value="ATPase_NBD"/>
</dbReference>
<dbReference type="InterPro" id="IPR018181">
    <property type="entry name" value="Heat_shock_70_CS"/>
</dbReference>
<dbReference type="InterPro" id="IPR029048">
    <property type="entry name" value="HSP70_C_sf"/>
</dbReference>
<dbReference type="InterPro" id="IPR029047">
    <property type="entry name" value="HSP70_peptide-bd_sf"/>
</dbReference>
<dbReference type="InterPro" id="IPR013126">
    <property type="entry name" value="Hsp_70_fam"/>
</dbReference>
<dbReference type="InterPro" id="IPR010236">
    <property type="entry name" value="ISC_FeS_clus_asmbl_HscA"/>
</dbReference>
<dbReference type="NCBIfam" id="TIGR01991">
    <property type="entry name" value="HscA"/>
    <property type="match status" value="1"/>
</dbReference>
<dbReference type="NCBIfam" id="NF003520">
    <property type="entry name" value="PRK05183.1"/>
    <property type="match status" value="1"/>
</dbReference>
<dbReference type="PANTHER" id="PTHR19375">
    <property type="entry name" value="HEAT SHOCK PROTEIN 70KDA"/>
    <property type="match status" value="1"/>
</dbReference>
<dbReference type="Pfam" id="PF00012">
    <property type="entry name" value="HSP70"/>
    <property type="match status" value="1"/>
</dbReference>
<dbReference type="PRINTS" id="PR00301">
    <property type="entry name" value="HEATSHOCK70"/>
</dbReference>
<dbReference type="SUPFAM" id="SSF53067">
    <property type="entry name" value="Actin-like ATPase domain"/>
    <property type="match status" value="2"/>
</dbReference>
<dbReference type="SUPFAM" id="SSF100934">
    <property type="entry name" value="Heat shock protein 70kD (HSP70), C-terminal subdomain"/>
    <property type="match status" value="1"/>
</dbReference>
<dbReference type="SUPFAM" id="SSF100920">
    <property type="entry name" value="Heat shock protein 70kD (HSP70), peptide-binding domain"/>
    <property type="match status" value="1"/>
</dbReference>
<dbReference type="PROSITE" id="PS00297">
    <property type="entry name" value="HSP70_1"/>
    <property type="match status" value="1"/>
</dbReference>
<dbReference type="PROSITE" id="PS00329">
    <property type="entry name" value="HSP70_2"/>
    <property type="match status" value="1"/>
</dbReference>
<dbReference type="PROSITE" id="PS01036">
    <property type="entry name" value="HSP70_3"/>
    <property type="match status" value="1"/>
</dbReference>
<protein>
    <recommendedName>
        <fullName evidence="1">Chaperone protein HscA homolog</fullName>
    </recommendedName>
</protein>
<name>HSCA_POLAQ</name>
<organism>
    <name type="scientific">Polynucleobacter asymbioticus (strain DSM 18221 / CIP 109841 / QLW-P1DMWA-1)</name>
    <name type="common">Polynucleobacter necessarius subsp. asymbioticus</name>
    <dbReference type="NCBI Taxonomy" id="312153"/>
    <lineage>
        <taxon>Bacteria</taxon>
        <taxon>Pseudomonadati</taxon>
        <taxon>Pseudomonadota</taxon>
        <taxon>Betaproteobacteria</taxon>
        <taxon>Burkholderiales</taxon>
        <taxon>Burkholderiaceae</taxon>
        <taxon>Polynucleobacter</taxon>
    </lineage>
</organism>
<reference key="1">
    <citation type="journal article" date="2012" name="Stand. Genomic Sci.">
        <title>Complete genome sequence of Polynucleobacter necessarius subsp. asymbioticus type strain (QLW-P1DMWA-1(T)).</title>
        <authorList>
            <person name="Meincke L."/>
            <person name="Copeland A."/>
            <person name="Lapidus A."/>
            <person name="Lucas S."/>
            <person name="Berry K.W."/>
            <person name="Del Rio T.G."/>
            <person name="Hammon N."/>
            <person name="Dalin E."/>
            <person name="Tice H."/>
            <person name="Pitluck S."/>
            <person name="Richardson P."/>
            <person name="Bruce D."/>
            <person name="Goodwin L."/>
            <person name="Han C."/>
            <person name="Tapia R."/>
            <person name="Detter J.C."/>
            <person name="Schmutz J."/>
            <person name="Brettin T."/>
            <person name="Larimer F."/>
            <person name="Land M."/>
            <person name="Hauser L."/>
            <person name="Kyrpides N.C."/>
            <person name="Ivanova N."/>
            <person name="Goker M."/>
            <person name="Woyke T."/>
            <person name="Wu Q.L."/>
            <person name="Pockl M."/>
            <person name="Hahn M.W."/>
            <person name="Klenk H.P."/>
        </authorList>
    </citation>
    <scope>NUCLEOTIDE SEQUENCE [LARGE SCALE GENOMIC DNA]</scope>
    <source>
        <strain>DSM 18221 / CIP 109841 / QLW-P1DMWA-1</strain>
    </source>
</reference>
<keyword id="KW-0067">ATP-binding</keyword>
<keyword id="KW-0143">Chaperone</keyword>
<keyword id="KW-0547">Nucleotide-binding</keyword>
<keyword id="KW-1185">Reference proteome</keyword>